<accession>Q089P4</accession>
<organism>
    <name type="scientific">Shewanella frigidimarina (strain NCIMB 400)</name>
    <dbReference type="NCBI Taxonomy" id="318167"/>
    <lineage>
        <taxon>Bacteria</taxon>
        <taxon>Pseudomonadati</taxon>
        <taxon>Pseudomonadota</taxon>
        <taxon>Gammaproteobacteria</taxon>
        <taxon>Alteromonadales</taxon>
        <taxon>Shewanellaceae</taxon>
        <taxon>Shewanella</taxon>
    </lineage>
</organism>
<evidence type="ECO:0000255" key="1">
    <source>
        <dbReference type="HAMAP-Rule" id="MF_01367"/>
    </source>
</evidence>
<evidence type="ECO:0000305" key="2"/>
<name>RL14_SHEFN</name>
<protein>
    <recommendedName>
        <fullName evidence="1">Large ribosomal subunit protein uL14</fullName>
    </recommendedName>
    <alternativeName>
        <fullName evidence="2">50S ribosomal protein L14</fullName>
    </alternativeName>
</protein>
<proteinExistence type="inferred from homology"/>
<reference key="1">
    <citation type="submission" date="2006-08" db="EMBL/GenBank/DDBJ databases">
        <title>Complete sequence of Shewanella frigidimarina NCIMB 400.</title>
        <authorList>
            <consortium name="US DOE Joint Genome Institute"/>
            <person name="Copeland A."/>
            <person name="Lucas S."/>
            <person name="Lapidus A."/>
            <person name="Barry K."/>
            <person name="Detter J.C."/>
            <person name="Glavina del Rio T."/>
            <person name="Hammon N."/>
            <person name="Israni S."/>
            <person name="Dalin E."/>
            <person name="Tice H."/>
            <person name="Pitluck S."/>
            <person name="Fredrickson J.K."/>
            <person name="Kolker E."/>
            <person name="McCuel L.A."/>
            <person name="DiChristina T."/>
            <person name="Nealson K.H."/>
            <person name="Newman D."/>
            <person name="Tiedje J.M."/>
            <person name="Zhou J."/>
            <person name="Romine M.F."/>
            <person name="Culley D.E."/>
            <person name="Serres M."/>
            <person name="Chertkov O."/>
            <person name="Brettin T."/>
            <person name="Bruce D."/>
            <person name="Han C."/>
            <person name="Tapia R."/>
            <person name="Gilna P."/>
            <person name="Schmutz J."/>
            <person name="Larimer F."/>
            <person name="Land M."/>
            <person name="Hauser L."/>
            <person name="Kyrpides N."/>
            <person name="Mikhailova N."/>
            <person name="Richardson P."/>
        </authorList>
    </citation>
    <scope>NUCLEOTIDE SEQUENCE [LARGE SCALE GENOMIC DNA]</scope>
    <source>
        <strain>NCIMB 400</strain>
    </source>
</reference>
<feature type="chain" id="PRO_0000266556" description="Large ribosomal subunit protein uL14">
    <location>
        <begin position="1"/>
        <end position="122"/>
    </location>
</feature>
<comment type="function">
    <text evidence="1">Binds to 23S rRNA. Forms part of two intersubunit bridges in the 70S ribosome.</text>
</comment>
<comment type="subunit">
    <text evidence="1">Part of the 50S ribosomal subunit. Forms a cluster with proteins L3 and L19. In the 70S ribosome, L14 and L19 interact and together make contacts with the 16S rRNA in bridges B5 and B8.</text>
</comment>
<comment type="similarity">
    <text evidence="1">Belongs to the universal ribosomal protein uL14 family.</text>
</comment>
<keyword id="KW-1185">Reference proteome</keyword>
<keyword id="KW-0687">Ribonucleoprotein</keyword>
<keyword id="KW-0689">Ribosomal protein</keyword>
<keyword id="KW-0694">RNA-binding</keyword>
<keyword id="KW-0699">rRNA-binding</keyword>
<gene>
    <name evidence="1" type="primary">rplN</name>
    <name type="ordered locus">Sfri_0158</name>
</gene>
<sequence>MIQMQSTLDVACNSGARRVQCIKVLGGSHRRYAGIGDIIKVSVKEAIPRAKAKKGDVYNAVVVRTKKGVRRPDGSVIRFDRNAAVLLNANLAPIGTRIFGPVTRELRNDKFMKIVSLAPEVL</sequence>
<dbReference type="EMBL" id="CP000447">
    <property type="protein sequence ID" value="ABI70021.1"/>
    <property type="molecule type" value="Genomic_DNA"/>
</dbReference>
<dbReference type="RefSeq" id="WP_011635649.1">
    <property type="nucleotide sequence ID" value="NC_008345.1"/>
</dbReference>
<dbReference type="SMR" id="Q089P4"/>
<dbReference type="STRING" id="318167.Sfri_0158"/>
<dbReference type="GeneID" id="90572197"/>
<dbReference type="KEGG" id="sfr:Sfri_0158"/>
<dbReference type="eggNOG" id="COG0093">
    <property type="taxonomic scope" value="Bacteria"/>
</dbReference>
<dbReference type="HOGENOM" id="CLU_095071_2_1_6"/>
<dbReference type="OrthoDB" id="9806379at2"/>
<dbReference type="Proteomes" id="UP000000684">
    <property type="component" value="Chromosome"/>
</dbReference>
<dbReference type="GO" id="GO:0022625">
    <property type="term" value="C:cytosolic large ribosomal subunit"/>
    <property type="evidence" value="ECO:0007669"/>
    <property type="project" value="TreeGrafter"/>
</dbReference>
<dbReference type="GO" id="GO:0070180">
    <property type="term" value="F:large ribosomal subunit rRNA binding"/>
    <property type="evidence" value="ECO:0007669"/>
    <property type="project" value="TreeGrafter"/>
</dbReference>
<dbReference type="GO" id="GO:0003735">
    <property type="term" value="F:structural constituent of ribosome"/>
    <property type="evidence" value="ECO:0007669"/>
    <property type="project" value="InterPro"/>
</dbReference>
<dbReference type="GO" id="GO:0006412">
    <property type="term" value="P:translation"/>
    <property type="evidence" value="ECO:0007669"/>
    <property type="project" value="UniProtKB-UniRule"/>
</dbReference>
<dbReference type="CDD" id="cd00337">
    <property type="entry name" value="Ribosomal_uL14"/>
    <property type="match status" value="1"/>
</dbReference>
<dbReference type="FunFam" id="2.40.150.20:FF:000001">
    <property type="entry name" value="50S ribosomal protein L14"/>
    <property type="match status" value="1"/>
</dbReference>
<dbReference type="Gene3D" id="2.40.150.20">
    <property type="entry name" value="Ribosomal protein L14"/>
    <property type="match status" value="1"/>
</dbReference>
<dbReference type="HAMAP" id="MF_01367">
    <property type="entry name" value="Ribosomal_uL14"/>
    <property type="match status" value="1"/>
</dbReference>
<dbReference type="InterPro" id="IPR000218">
    <property type="entry name" value="Ribosomal_uL14"/>
</dbReference>
<dbReference type="InterPro" id="IPR005745">
    <property type="entry name" value="Ribosomal_uL14_bac-type"/>
</dbReference>
<dbReference type="InterPro" id="IPR019972">
    <property type="entry name" value="Ribosomal_uL14_CS"/>
</dbReference>
<dbReference type="InterPro" id="IPR036853">
    <property type="entry name" value="Ribosomal_uL14_sf"/>
</dbReference>
<dbReference type="NCBIfam" id="TIGR01067">
    <property type="entry name" value="rplN_bact"/>
    <property type="match status" value="1"/>
</dbReference>
<dbReference type="PANTHER" id="PTHR11761">
    <property type="entry name" value="50S/60S RIBOSOMAL PROTEIN L14/L23"/>
    <property type="match status" value="1"/>
</dbReference>
<dbReference type="PANTHER" id="PTHR11761:SF3">
    <property type="entry name" value="LARGE RIBOSOMAL SUBUNIT PROTEIN UL14M"/>
    <property type="match status" value="1"/>
</dbReference>
<dbReference type="Pfam" id="PF00238">
    <property type="entry name" value="Ribosomal_L14"/>
    <property type="match status" value="1"/>
</dbReference>
<dbReference type="SMART" id="SM01374">
    <property type="entry name" value="Ribosomal_L14"/>
    <property type="match status" value="1"/>
</dbReference>
<dbReference type="SUPFAM" id="SSF50193">
    <property type="entry name" value="Ribosomal protein L14"/>
    <property type="match status" value="1"/>
</dbReference>
<dbReference type="PROSITE" id="PS00049">
    <property type="entry name" value="RIBOSOMAL_L14"/>
    <property type="match status" value="1"/>
</dbReference>